<reference key="1">
    <citation type="journal article" date="2001" name="Nature">
        <title>Genome sequence of Yersinia pestis, the causative agent of plague.</title>
        <authorList>
            <person name="Parkhill J."/>
            <person name="Wren B.W."/>
            <person name="Thomson N.R."/>
            <person name="Titball R.W."/>
            <person name="Holden M.T.G."/>
            <person name="Prentice M.B."/>
            <person name="Sebaihia M."/>
            <person name="James K.D."/>
            <person name="Churcher C.M."/>
            <person name="Mungall K.L."/>
            <person name="Baker S."/>
            <person name="Basham D."/>
            <person name="Bentley S.D."/>
            <person name="Brooks K."/>
            <person name="Cerdeno-Tarraga A.-M."/>
            <person name="Chillingworth T."/>
            <person name="Cronin A."/>
            <person name="Davies R.M."/>
            <person name="Davis P."/>
            <person name="Dougan G."/>
            <person name="Feltwell T."/>
            <person name="Hamlin N."/>
            <person name="Holroyd S."/>
            <person name="Jagels K."/>
            <person name="Karlyshev A.V."/>
            <person name="Leather S."/>
            <person name="Moule S."/>
            <person name="Oyston P.C.F."/>
            <person name="Quail M.A."/>
            <person name="Rutherford K.M."/>
            <person name="Simmonds M."/>
            <person name="Skelton J."/>
            <person name="Stevens K."/>
            <person name="Whitehead S."/>
            <person name="Barrell B.G."/>
        </authorList>
    </citation>
    <scope>NUCLEOTIDE SEQUENCE [LARGE SCALE GENOMIC DNA]</scope>
    <source>
        <strain>CO-92 / Biovar Orientalis</strain>
    </source>
</reference>
<reference key="2">
    <citation type="journal article" date="2002" name="J. Bacteriol.">
        <title>Genome sequence of Yersinia pestis KIM.</title>
        <authorList>
            <person name="Deng W."/>
            <person name="Burland V."/>
            <person name="Plunkett G. III"/>
            <person name="Boutin A."/>
            <person name="Mayhew G.F."/>
            <person name="Liss P."/>
            <person name="Perna N.T."/>
            <person name="Rose D.J."/>
            <person name="Mau B."/>
            <person name="Zhou S."/>
            <person name="Schwartz D.C."/>
            <person name="Fetherston J.D."/>
            <person name="Lindler L.E."/>
            <person name="Brubaker R.R."/>
            <person name="Plano G.V."/>
            <person name="Straley S.C."/>
            <person name="McDonough K.A."/>
            <person name="Nilles M.L."/>
            <person name="Matson J.S."/>
            <person name="Blattner F.R."/>
            <person name="Perry R.D."/>
        </authorList>
    </citation>
    <scope>NUCLEOTIDE SEQUENCE [LARGE SCALE GENOMIC DNA]</scope>
    <source>
        <strain>KIM10+ / Biovar Mediaevalis</strain>
    </source>
</reference>
<reference key="3">
    <citation type="journal article" date="2004" name="DNA Res.">
        <title>Complete genome sequence of Yersinia pestis strain 91001, an isolate avirulent to humans.</title>
        <authorList>
            <person name="Song Y."/>
            <person name="Tong Z."/>
            <person name="Wang J."/>
            <person name="Wang L."/>
            <person name="Guo Z."/>
            <person name="Han Y."/>
            <person name="Zhang J."/>
            <person name="Pei D."/>
            <person name="Zhou D."/>
            <person name="Qin H."/>
            <person name="Pang X."/>
            <person name="Han Y."/>
            <person name="Zhai J."/>
            <person name="Li M."/>
            <person name="Cui B."/>
            <person name="Qi Z."/>
            <person name="Jin L."/>
            <person name="Dai R."/>
            <person name="Chen F."/>
            <person name="Li S."/>
            <person name="Ye C."/>
            <person name="Du Z."/>
            <person name="Lin W."/>
            <person name="Wang J."/>
            <person name="Yu J."/>
            <person name="Yang H."/>
            <person name="Wang J."/>
            <person name="Huang P."/>
            <person name="Yang R."/>
        </authorList>
    </citation>
    <scope>NUCLEOTIDE SEQUENCE [LARGE SCALE GENOMIC DNA]</scope>
    <source>
        <strain>91001 / Biovar Mediaevalis</strain>
    </source>
</reference>
<comment type="function">
    <text evidence="1">IF-3 binds to the 30S ribosomal subunit and shifts the equilibrium between 70S ribosomes and their 50S and 30S subunits in favor of the free subunits, thus enhancing the availability of 30S subunits on which protein synthesis initiation begins.</text>
</comment>
<comment type="subunit">
    <text evidence="1">Monomer.</text>
</comment>
<comment type="subcellular location">
    <subcellularLocation>
        <location evidence="1">Cytoplasm</location>
    </subcellularLocation>
</comment>
<comment type="similarity">
    <text evidence="1">Belongs to the IF-3 family.</text>
</comment>
<comment type="sequence caution" evidence="2">
    <conflict type="erroneous initiation">
        <sequence resource="EMBL-CDS" id="AAM85471"/>
    </conflict>
</comment>
<comment type="sequence caution" evidence="2">
    <conflict type="erroneous initiation">
        <sequence resource="EMBL-CDS" id="AAS62426"/>
    </conflict>
</comment>
<keyword id="KW-0963">Cytoplasm</keyword>
<keyword id="KW-0396">Initiation factor</keyword>
<keyword id="KW-0648">Protein biosynthesis</keyword>
<keyword id="KW-1185">Reference proteome</keyword>
<accession>Q8ZDW6</accession>
<accession>Q0WE92</accession>
<proteinExistence type="inferred from homology"/>
<gene>
    <name evidence="1" type="primary">infC</name>
    <name type="ordered locus">YPO2432</name>
    <name type="ordered locus">y1904</name>
    <name type="ordered locus">YP_2220</name>
</gene>
<feature type="chain" id="PRO_0000177611" description="Translation initiation factor IF-3">
    <location>
        <begin position="1"/>
        <end position="183"/>
    </location>
</feature>
<name>IF3_YERPE</name>
<organism>
    <name type="scientific">Yersinia pestis</name>
    <dbReference type="NCBI Taxonomy" id="632"/>
    <lineage>
        <taxon>Bacteria</taxon>
        <taxon>Pseudomonadati</taxon>
        <taxon>Pseudomonadota</taxon>
        <taxon>Gammaproteobacteria</taxon>
        <taxon>Enterobacterales</taxon>
        <taxon>Yersiniaceae</taxon>
        <taxon>Yersinia</taxon>
    </lineage>
</organism>
<protein>
    <recommendedName>
        <fullName evidence="1">Translation initiation factor IF-3</fullName>
    </recommendedName>
</protein>
<sequence length="183" mass="20936">MKGGKRVQPARPNRINKEIRATEVRLTGVDGEQIGIVSLNEALEKAEEAGVDLVEISPNAEPPVCRIMDYGKFLYEKSKSTKEQKKKQKVIQVKEIKFRPGTDDGDYQVKLRNLIRFLEDGDKAKITLRFRGREMAHQQIGMEVLNRVRKDLCEDSDLAVVESFPTRIEGRQMIMVLAPKKRQ</sequence>
<evidence type="ECO:0000255" key="1">
    <source>
        <dbReference type="HAMAP-Rule" id="MF_00080"/>
    </source>
</evidence>
<evidence type="ECO:0000305" key="2"/>
<dbReference type="EMBL" id="AL590842">
    <property type="protein sequence ID" value="CAL21060.1"/>
    <property type="molecule type" value="Genomic_DNA"/>
</dbReference>
<dbReference type="EMBL" id="AE009952">
    <property type="protein sequence ID" value="AAM85471.1"/>
    <property type="status" value="ALT_INIT"/>
    <property type="molecule type" value="Genomic_DNA"/>
</dbReference>
<dbReference type="EMBL" id="AE017042">
    <property type="protein sequence ID" value="AAS62426.1"/>
    <property type="status" value="ALT_INIT"/>
    <property type="molecule type" value="Genomic_DNA"/>
</dbReference>
<dbReference type="PIR" id="AI0296">
    <property type="entry name" value="AI0296"/>
</dbReference>
<dbReference type="RefSeq" id="WP_002227898.1">
    <property type="nucleotide sequence ID" value="NZ_WUCM01000025.1"/>
</dbReference>
<dbReference type="RefSeq" id="YP_002347396.1">
    <property type="nucleotide sequence ID" value="NC_003143.1"/>
</dbReference>
<dbReference type="SMR" id="Q8ZDW6"/>
<dbReference type="STRING" id="214092.YPO2432"/>
<dbReference type="PaxDb" id="214092-YPO2432"/>
<dbReference type="EnsemblBacteria" id="AAS62426">
    <property type="protein sequence ID" value="AAS62426"/>
    <property type="gene ID" value="YP_2220"/>
</dbReference>
<dbReference type="GeneID" id="66879647"/>
<dbReference type="KEGG" id="ype:YPO2432"/>
<dbReference type="KEGG" id="ypk:y1904"/>
<dbReference type="KEGG" id="ypm:YP_2220"/>
<dbReference type="PATRIC" id="fig|214092.21.peg.2841"/>
<dbReference type="eggNOG" id="COG0290">
    <property type="taxonomic scope" value="Bacteria"/>
</dbReference>
<dbReference type="HOGENOM" id="CLU_054919_3_2_6"/>
<dbReference type="OMA" id="KCTVIFR"/>
<dbReference type="OrthoDB" id="9806014at2"/>
<dbReference type="Proteomes" id="UP000000815">
    <property type="component" value="Chromosome"/>
</dbReference>
<dbReference type="Proteomes" id="UP000001019">
    <property type="component" value="Chromosome"/>
</dbReference>
<dbReference type="Proteomes" id="UP000002490">
    <property type="component" value="Chromosome"/>
</dbReference>
<dbReference type="GO" id="GO:0005829">
    <property type="term" value="C:cytosol"/>
    <property type="evidence" value="ECO:0000318"/>
    <property type="project" value="GO_Central"/>
</dbReference>
<dbReference type="GO" id="GO:0043022">
    <property type="term" value="F:ribosome binding"/>
    <property type="evidence" value="ECO:0000318"/>
    <property type="project" value="GO_Central"/>
</dbReference>
<dbReference type="GO" id="GO:0003743">
    <property type="term" value="F:translation initiation factor activity"/>
    <property type="evidence" value="ECO:0000318"/>
    <property type="project" value="GO_Central"/>
</dbReference>
<dbReference type="GO" id="GO:0032790">
    <property type="term" value="P:ribosome disassembly"/>
    <property type="evidence" value="ECO:0000318"/>
    <property type="project" value="GO_Central"/>
</dbReference>
<dbReference type="FunFam" id="3.10.20.80:FF:000001">
    <property type="entry name" value="Translation initiation factor IF-3"/>
    <property type="match status" value="1"/>
</dbReference>
<dbReference type="FunFam" id="3.30.110.10:FF:000001">
    <property type="entry name" value="Translation initiation factor IF-3"/>
    <property type="match status" value="1"/>
</dbReference>
<dbReference type="Gene3D" id="3.30.110.10">
    <property type="entry name" value="Translation initiation factor 3 (IF-3), C-terminal domain"/>
    <property type="match status" value="1"/>
</dbReference>
<dbReference type="Gene3D" id="3.10.20.80">
    <property type="entry name" value="Translation initiation factor 3 (IF-3), N-terminal domain"/>
    <property type="match status" value="1"/>
</dbReference>
<dbReference type="HAMAP" id="MF_00080">
    <property type="entry name" value="IF_3"/>
    <property type="match status" value="1"/>
</dbReference>
<dbReference type="InterPro" id="IPR036788">
    <property type="entry name" value="T_IF-3_C_sf"/>
</dbReference>
<dbReference type="InterPro" id="IPR036787">
    <property type="entry name" value="T_IF-3_N_sf"/>
</dbReference>
<dbReference type="InterPro" id="IPR019813">
    <property type="entry name" value="Translation_initiation_fac3_CS"/>
</dbReference>
<dbReference type="InterPro" id="IPR001288">
    <property type="entry name" value="Translation_initiation_fac_3"/>
</dbReference>
<dbReference type="InterPro" id="IPR019815">
    <property type="entry name" value="Translation_initiation_fac_3_C"/>
</dbReference>
<dbReference type="InterPro" id="IPR019814">
    <property type="entry name" value="Translation_initiation_fac_3_N"/>
</dbReference>
<dbReference type="NCBIfam" id="TIGR00168">
    <property type="entry name" value="infC"/>
    <property type="match status" value="1"/>
</dbReference>
<dbReference type="PANTHER" id="PTHR10938">
    <property type="entry name" value="TRANSLATION INITIATION FACTOR IF-3"/>
    <property type="match status" value="1"/>
</dbReference>
<dbReference type="PANTHER" id="PTHR10938:SF0">
    <property type="entry name" value="TRANSLATION INITIATION FACTOR IF-3, MITOCHONDRIAL"/>
    <property type="match status" value="1"/>
</dbReference>
<dbReference type="Pfam" id="PF00707">
    <property type="entry name" value="IF3_C"/>
    <property type="match status" value="1"/>
</dbReference>
<dbReference type="Pfam" id="PF05198">
    <property type="entry name" value="IF3_N"/>
    <property type="match status" value="1"/>
</dbReference>
<dbReference type="SUPFAM" id="SSF55200">
    <property type="entry name" value="Translation initiation factor IF3, C-terminal domain"/>
    <property type="match status" value="1"/>
</dbReference>
<dbReference type="SUPFAM" id="SSF54364">
    <property type="entry name" value="Translation initiation factor IF3, N-terminal domain"/>
    <property type="match status" value="1"/>
</dbReference>
<dbReference type="PROSITE" id="PS00938">
    <property type="entry name" value="IF3"/>
    <property type="match status" value="1"/>
</dbReference>